<evidence type="ECO:0000255" key="1">
    <source>
        <dbReference type="HAMAP-Rule" id="MF_01077"/>
    </source>
</evidence>
<reference key="1">
    <citation type="submission" date="2006-01" db="EMBL/GenBank/DDBJ databases">
        <title>Complete sequence of Novosphingobium aromaticivorans DSM 12444.</title>
        <authorList>
            <consortium name="US DOE Joint Genome Institute"/>
            <person name="Copeland A."/>
            <person name="Lucas S."/>
            <person name="Lapidus A."/>
            <person name="Barry K."/>
            <person name="Detter J.C."/>
            <person name="Glavina T."/>
            <person name="Hammon N."/>
            <person name="Israni S."/>
            <person name="Pitluck S."/>
            <person name="Chain P."/>
            <person name="Malfatti S."/>
            <person name="Shin M."/>
            <person name="Vergez L."/>
            <person name="Schmutz J."/>
            <person name="Larimer F."/>
            <person name="Land M."/>
            <person name="Kyrpides N."/>
            <person name="Ivanova N."/>
            <person name="Fredrickson J."/>
            <person name="Balkwill D."/>
            <person name="Romine M.F."/>
            <person name="Richardson P."/>
        </authorList>
    </citation>
    <scope>NUCLEOTIDE SEQUENCE [LARGE SCALE GENOMIC DNA]</scope>
    <source>
        <strain>ATCC 700278 / DSM 12444 / CCUG 56034 / CIP 105152 / NBRC 16084 / F199</strain>
    </source>
</reference>
<organism>
    <name type="scientific">Novosphingobium aromaticivorans (strain ATCC 700278 / DSM 12444 / CCUG 56034 / CIP 105152 / NBRC 16084 / F199)</name>
    <dbReference type="NCBI Taxonomy" id="279238"/>
    <lineage>
        <taxon>Bacteria</taxon>
        <taxon>Pseudomonadati</taxon>
        <taxon>Pseudomonadota</taxon>
        <taxon>Alphaproteobacteria</taxon>
        <taxon>Sphingomonadales</taxon>
        <taxon>Sphingomonadaceae</taxon>
        <taxon>Novosphingobium</taxon>
    </lineage>
</organism>
<protein>
    <recommendedName>
        <fullName evidence="1">Ribosome maturation factor RimP</fullName>
    </recommendedName>
</protein>
<accession>Q2G5E4</accession>
<proteinExistence type="inferred from homology"/>
<comment type="function">
    <text evidence="1">Required for maturation of 30S ribosomal subunits.</text>
</comment>
<comment type="subcellular location">
    <subcellularLocation>
        <location evidence="1">Cytoplasm</location>
    </subcellularLocation>
</comment>
<comment type="similarity">
    <text evidence="1">Belongs to the RimP family.</text>
</comment>
<dbReference type="EMBL" id="CP000248">
    <property type="protein sequence ID" value="ABD26929.1"/>
    <property type="molecule type" value="Genomic_DNA"/>
</dbReference>
<dbReference type="RefSeq" id="WP_011446135.1">
    <property type="nucleotide sequence ID" value="NC_007794.1"/>
</dbReference>
<dbReference type="SMR" id="Q2G5E4"/>
<dbReference type="STRING" id="279238.Saro_2493"/>
<dbReference type="KEGG" id="nar:Saro_2493"/>
<dbReference type="eggNOG" id="COG0779">
    <property type="taxonomic scope" value="Bacteria"/>
</dbReference>
<dbReference type="HOGENOM" id="CLU_070525_0_1_5"/>
<dbReference type="Proteomes" id="UP000009134">
    <property type="component" value="Chromosome"/>
</dbReference>
<dbReference type="GO" id="GO:0005829">
    <property type="term" value="C:cytosol"/>
    <property type="evidence" value="ECO:0007669"/>
    <property type="project" value="TreeGrafter"/>
</dbReference>
<dbReference type="GO" id="GO:0000028">
    <property type="term" value="P:ribosomal small subunit assembly"/>
    <property type="evidence" value="ECO:0007669"/>
    <property type="project" value="TreeGrafter"/>
</dbReference>
<dbReference type="GO" id="GO:0006412">
    <property type="term" value="P:translation"/>
    <property type="evidence" value="ECO:0007669"/>
    <property type="project" value="TreeGrafter"/>
</dbReference>
<dbReference type="CDD" id="cd01734">
    <property type="entry name" value="YlxS_C"/>
    <property type="match status" value="1"/>
</dbReference>
<dbReference type="Gene3D" id="2.30.30.180">
    <property type="entry name" value="Ribosome maturation factor RimP, C-terminal domain"/>
    <property type="match status" value="1"/>
</dbReference>
<dbReference type="Gene3D" id="3.30.300.70">
    <property type="entry name" value="RimP-like superfamily, N-terminal"/>
    <property type="match status" value="1"/>
</dbReference>
<dbReference type="HAMAP" id="MF_01077">
    <property type="entry name" value="RimP"/>
    <property type="match status" value="1"/>
</dbReference>
<dbReference type="InterPro" id="IPR003728">
    <property type="entry name" value="Ribosome_maturation_RimP"/>
</dbReference>
<dbReference type="InterPro" id="IPR028998">
    <property type="entry name" value="RimP_C"/>
</dbReference>
<dbReference type="InterPro" id="IPR036847">
    <property type="entry name" value="RimP_C_sf"/>
</dbReference>
<dbReference type="InterPro" id="IPR028989">
    <property type="entry name" value="RimP_N"/>
</dbReference>
<dbReference type="InterPro" id="IPR035956">
    <property type="entry name" value="RimP_N_sf"/>
</dbReference>
<dbReference type="NCBIfam" id="NF011229">
    <property type="entry name" value="PRK14636.1"/>
    <property type="match status" value="1"/>
</dbReference>
<dbReference type="PANTHER" id="PTHR33867">
    <property type="entry name" value="RIBOSOME MATURATION FACTOR RIMP"/>
    <property type="match status" value="1"/>
</dbReference>
<dbReference type="PANTHER" id="PTHR33867:SF1">
    <property type="entry name" value="RIBOSOME MATURATION FACTOR RIMP"/>
    <property type="match status" value="1"/>
</dbReference>
<dbReference type="Pfam" id="PF17384">
    <property type="entry name" value="DUF150_C"/>
    <property type="match status" value="1"/>
</dbReference>
<dbReference type="Pfam" id="PF02576">
    <property type="entry name" value="RimP_N"/>
    <property type="match status" value="1"/>
</dbReference>
<dbReference type="SUPFAM" id="SSF74942">
    <property type="entry name" value="YhbC-like, C-terminal domain"/>
    <property type="match status" value="1"/>
</dbReference>
<dbReference type="SUPFAM" id="SSF75420">
    <property type="entry name" value="YhbC-like, N-terminal domain"/>
    <property type="match status" value="1"/>
</dbReference>
<sequence length="186" mass="20790">MTDIARIIEVVEPEAKALGFDLVRVRYFKGGEIGDEEHTLQIMAERPDTGQLVIEDCAALSRRVSDRFDELEEAGDVLIEDAYRLEVSSPGIDRPLTRAKDFAAWIGHEARVELSELLDNRKRFRGELKGFDAETQAISIEDDGVVFEVPFDLVSNAKLILTDKLIAASRPLDTSGADEILEEQED</sequence>
<name>RIMP_NOVAD</name>
<feature type="chain" id="PRO_0000384722" description="Ribosome maturation factor RimP">
    <location>
        <begin position="1"/>
        <end position="186"/>
    </location>
</feature>
<keyword id="KW-0963">Cytoplasm</keyword>
<keyword id="KW-1185">Reference proteome</keyword>
<keyword id="KW-0690">Ribosome biogenesis</keyword>
<gene>
    <name evidence="1" type="primary">rimP</name>
    <name type="ordered locus">Saro_2493</name>
</gene>